<sequence>MNGDEVRARASELPAEPGVYQFVARDPDGTADGERVLYVGKAVDIRDRVRSYGDPRSERIAGMVARADDVTVAVTDTETQALLLEANLVKRHQPRYNVRLKDDKSYPLVQVTSHREAPRIEVTRDPDPGAAAFGPYTDKGDVETVVKAVRSVYGLRGCSEHKYRDRERPCLDYEMGLCAAPCTGAISEREYREAVESATRFFEGETGALADPLRREMAAAAQAEAFERAANLRDRLAVVEGFHEGGGAAVAAGDADAGASTDVLGVAVEGDAATVARLHAEGGQLVERDQHRLEAPQGEDRVAAVLAAFLVQYYAERDLPERILLPEPHGDDEVAAWLDAADVAVGVPGAGREARLVELALKNAHRRAGGGDELGALADALGVRRPERIEGVDVSHAQGREVVGSNVCFVDGSAETADYRRKKLDEENDDYANMRRLVGWRAERAVDGRDDRPDPDVLLVDGGRGQLDAALDAVEAAGWDGPDAVIALAKDEEVVVTPDRTYDWGSDAPQLHVLQRVRDEAHRFAVAYHRTLRDDVTTALDGITGVGPELRARLLGRFGSVAGVRQASVKDLRDVAGVGEATAETIAKRL</sequence>
<reference key="1">
    <citation type="journal article" date="2000" name="Proc. Natl. Acad. Sci. U.S.A.">
        <title>Genome sequence of Halobacterium species NRC-1.</title>
        <authorList>
            <person name="Ng W.V."/>
            <person name="Kennedy S.P."/>
            <person name="Mahairas G.G."/>
            <person name="Berquist B."/>
            <person name="Pan M."/>
            <person name="Shukla H.D."/>
            <person name="Lasky S.R."/>
            <person name="Baliga N.S."/>
            <person name="Thorsson V."/>
            <person name="Sbrogna J."/>
            <person name="Swartzell S."/>
            <person name="Weir D."/>
            <person name="Hall J."/>
            <person name="Dahl T.A."/>
            <person name="Welti R."/>
            <person name="Goo Y.A."/>
            <person name="Leithauser B."/>
            <person name="Keller K."/>
            <person name="Cruz R."/>
            <person name="Danson M.J."/>
            <person name="Hough D.W."/>
            <person name="Maddocks D.G."/>
            <person name="Jablonski P.E."/>
            <person name="Krebs M.P."/>
            <person name="Angevine C.M."/>
            <person name="Dale H."/>
            <person name="Isenbarger T.A."/>
            <person name="Peck R.F."/>
            <person name="Pohlschroder M."/>
            <person name="Spudich J.L."/>
            <person name="Jung K.-H."/>
            <person name="Alam M."/>
            <person name="Freitas T."/>
            <person name="Hou S."/>
            <person name="Daniels C.J."/>
            <person name="Dennis P.P."/>
            <person name="Omer A.D."/>
            <person name="Ebhardt H."/>
            <person name="Lowe T.M."/>
            <person name="Liang P."/>
            <person name="Riley M."/>
            <person name="Hood L."/>
            <person name="DasSarma S."/>
        </authorList>
    </citation>
    <scope>NUCLEOTIDE SEQUENCE [LARGE SCALE GENOMIC DNA]</scope>
    <source>
        <strain>ATCC 700922 / JCM 11081 / NRC-1</strain>
    </source>
</reference>
<protein>
    <recommendedName>
        <fullName evidence="1">UvrABC system protein C</fullName>
        <shortName evidence="1">Protein UvrC</shortName>
    </recommendedName>
    <alternativeName>
        <fullName evidence="1">Excinuclease ABC subunit C</fullName>
    </alternativeName>
</protein>
<comment type="function">
    <text evidence="1">The UvrABC repair system catalyzes the recognition and processing of DNA lesions. UvrC both incises the 5' and 3' sides of the lesion. The N-terminal half is responsible for the 3' incision and the C-terminal half is responsible for the 5' incision.</text>
</comment>
<comment type="subunit">
    <text evidence="1">Interacts with UvrB in an incision complex.</text>
</comment>
<comment type="subcellular location">
    <subcellularLocation>
        <location evidence="1">Cytoplasm</location>
    </subcellularLocation>
</comment>
<comment type="similarity">
    <text evidence="1">Belongs to the UvrC family.</text>
</comment>
<dbReference type="EMBL" id="AE004437">
    <property type="protein sequence ID" value="AAG20476.1"/>
    <property type="molecule type" value="Genomic_DNA"/>
</dbReference>
<dbReference type="PIR" id="H84388">
    <property type="entry name" value="H84388"/>
</dbReference>
<dbReference type="RefSeq" id="WP_010903778.1">
    <property type="nucleotide sequence ID" value="NC_002607.1"/>
</dbReference>
<dbReference type="SMR" id="Q9HMU5"/>
<dbReference type="STRING" id="64091.VNG_2381G"/>
<dbReference type="PaxDb" id="64091-VNG_2381G"/>
<dbReference type="KEGG" id="hal:VNG_2381G"/>
<dbReference type="PATRIC" id="fig|64091.14.peg.1844"/>
<dbReference type="HOGENOM" id="CLU_014841_3_1_2"/>
<dbReference type="InParanoid" id="Q9HMU5"/>
<dbReference type="OrthoDB" id="121419at2157"/>
<dbReference type="PhylomeDB" id="Q9HMU5"/>
<dbReference type="Proteomes" id="UP000000554">
    <property type="component" value="Chromosome"/>
</dbReference>
<dbReference type="GO" id="GO:0005737">
    <property type="term" value="C:cytoplasm"/>
    <property type="evidence" value="ECO:0007669"/>
    <property type="project" value="UniProtKB-SubCell"/>
</dbReference>
<dbReference type="GO" id="GO:0009380">
    <property type="term" value="C:excinuclease repair complex"/>
    <property type="evidence" value="ECO:0000318"/>
    <property type="project" value="GO_Central"/>
</dbReference>
<dbReference type="GO" id="GO:0003677">
    <property type="term" value="F:DNA binding"/>
    <property type="evidence" value="ECO:0007669"/>
    <property type="project" value="UniProtKB-UniRule"/>
</dbReference>
<dbReference type="GO" id="GO:0009381">
    <property type="term" value="F:excinuclease ABC activity"/>
    <property type="evidence" value="ECO:0007669"/>
    <property type="project" value="UniProtKB-UniRule"/>
</dbReference>
<dbReference type="GO" id="GO:0006974">
    <property type="term" value="P:DNA damage response"/>
    <property type="evidence" value="ECO:0000318"/>
    <property type="project" value="GO_Central"/>
</dbReference>
<dbReference type="GO" id="GO:0006289">
    <property type="term" value="P:nucleotide-excision repair"/>
    <property type="evidence" value="ECO:0007669"/>
    <property type="project" value="UniProtKB-UniRule"/>
</dbReference>
<dbReference type="GO" id="GO:0009432">
    <property type="term" value="P:SOS response"/>
    <property type="evidence" value="ECO:0007669"/>
    <property type="project" value="UniProtKB-UniRule"/>
</dbReference>
<dbReference type="CDD" id="cd10434">
    <property type="entry name" value="GIY-YIG_UvrC_Cho"/>
    <property type="match status" value="1"/>
</dbReference>
<dbReference type="FunFam" id="3.30.420.340:FF:000004">
    <property type="entry name" value="UvrABC system protein C"/>
    <property type="match status" value="1"/>
</dbReference>
<dbReference type="Gene3D" id="1.10.150.20">
    <property type="entry name" value="5' to 3' exonuclease, C-terminal subdomain"/>
    <property type="match status" value="1"/>
</dbReference>
<dbReference type="Gene3D" id="3.40.1440.10">
    <property type="entry name" value="GIY-YIG endonuclease"/>
    <property type="match status" value="1"/>
</dbReference>
<dbReference type="Gene3D" id="3.30.420.340">
    <property type="entry name" value="UvrC, RNAse H endonuclease domain"/>
    <property type="match status" value="1"/>
</dbReference>
<dbReference type="HAMAP" id="MF_00203">
    <property type="entry name" value="UvrC"/>
    <property type="match status" value="1"/>
</dbReference>
<dbReference type="InterPro" id="IPR000305">
    <property type="entry name" value="GIY-YIG_endonuc"/>
</dbReference>
<dbReference type="InterPro" id="IPR035901">
    <property type="entry name" value="GIY-YIG_endonuc_sf"/>
</dbReference>
<dbReference type="InterPro" id="IPR047296">
    <property type="entry name" value="GIY-YIG_UvrC_Cho"/>
</dbReference>
<dbReference type="InterPro" id="IPR003583">
    <property type="entry name" value="Hlx-hairpin-Hlx_DNA-bd_motif"/>
</dbReference>
<dbReference type="InterPro" id="IPR010994">
    <property type="entry name" value="RuvA_2-like"/>
</dbReference>
<dbReference type="InterPro" id="IPR001943">
    <property type="entry name" value="UVR_dom"/>
</dbReference>
<dbReference type="InterPro" id="IPR036876">
    <property type="entry name" value="UVR_dom_sf"/>
</dbReference>
<dbReference type="InterPro" id="IPR050066">
    <property type="entry name" value="UvrABC_protein_C"/>
</dbReference>
<dbReference type="InterPro" id="IPR004791">
    <property type="entry name" value="UvrC"/>
</dbReference>
<dbReference type="InterPro" id="IPR001162">
    <property type="entry name" value="UvrC_RNase_H_dom"/>
</dbReference>
<dbReference type="InterPro" id="IPR038476">
    <property type="entry name" value="UvrC_RNase_H_dom_sf"/>
</dbReference>
<dbReference type="NCBIfam" id="NF011262">
    <property type="entry name" value="PRK14668.1"/>
    <property type="match status" value="1"/>
</dbReference>
<dbReference type="NCBIfam" id="TIGR00194">
    <property type="entry name" value="uvrC"/>
    <property type="match status" value="1"/>
</dbReference>
<dbReference type="PANTHER" id="PTHR30562:SF1">
    <property type="entry name" value="UVRABC SYSTEM PROTEIN C"/>
    <property type="match status" value="1"/>
</dbReference>
<dbReference type="PANTHER" id="PTHR30562">
    <property type="entry name" value="UVRC/OXIDOREDUCTASE"/>
    <property type="match status" value="1"/>
</dbReference>
<dbReference type="Pfam" id="PF14520">
    <property type="entry name" value="HHH_5"/>
    <property type="match status" value="1"/>
</dbReference>
<dbReference type="Pfam" id="PF02151">
    <property type="entry name" value="UVR"/>
    <property type="match status" value="1"/>
</dbReference>
<dbReference type="Pfam" id="PF22920">
    <property type="entry name" value="UvrC_RNaseH"/>
    <property type="match status" value="1"/>
</dbReference>
<dbReference type="Pfam" id="PF08459">
    <property type="entry name" value="UvrC_RNaseH_dom"/>
    <property type="match status" value="1"/>
</dbReference>
<dbReference type="SMART" id="SM00465">
    <property type="entry name" value="GIYc"/>
    <property type="match status" value="1"/>
</dbReference>
<dbReference type="SMART" id="SM00278">
    <property type="entry name" value="HhH1"/>
    <property type="match status" value="2"/>
</dbReference>
<dbReference type="SUPFAM" id="SSF46600">
    <property type="entry name" value="C-terminal UvrC-binding domain of UvrB"/>
    <property type="match status" value="1"/>
</dbReference>
<dbReference type="SUPFAM" id="SSF82771">
    <property type="entry name" value="GIY-YIG endonuclease"/>
    <property type="match status" value="1"/>
</dbReference>
<dbReference type="SUPFAM" id="SSF47781">
    <property type="entry name" value="RuvA domain 2-like"/>
    <property type="match status" value="1"/>
</dbReference>
<dbReference type="PROSITE" id="PS50164">
    <property type="entry name" value="GIY_YIG"/>
    <property type="match status" value="1"/>
</dbReference>
<dbReference type="PROSITE" id="PS50151">
    <property type="entry name" value="UVR"/>
    <property type="match status" value="1"/>
</dbReference>
<dbReference type="PROSITE" id="PS50165">
    <property type="entry name" value="UVRC"/>
    <property type="match status" value="1"/>
</dbReference>
<keyword id="KW-0963">Cytoplasm</keyword>
<keyword id="KW-0227">DNA damage</keyword>
<keyword id="KW-0228">DNA excision</keyword>
<keyword id="KW-0234">DNA repair</keyword>
<keyword id="KW-0267">Excision nuclease</keyword>
<keyword id="KW-1185">Reference proteome</keyword>
<keyword id="KW-0742">SOS response</keyword>
<evidence type="ECO:0000255" key="1">
    <source>
        <dbReference type="HAMAP-Rule" id="MF_00203"/>
    </source>
</evidence>
<name>UVRC_HALSA</name>
<gene>
    <name evidence="1" type="primary">uvrC</name>
    <name type="ordered locus">VNG_2381G</name>
</gene>
<accession>Q9HMU5</accession>
<proteinExistence type="inferred from homology"/>
<organism>
    <name type="scientific">Halobacterium salinarum (strain ATCC 700922 / JCM 11081 / NRC-1)</name>
    <name type="common">Halobacterium halobium</name>
    <dbReference type="NCBI Taxonomy" id="64091"/>
    <lineage>
        <taxon>Archaea</taxon>
        <taxon>Methanobacteriati</taxon>
        <taxon>Methanobacteriota</taxon>
        <taxon>Stenosarchaea group</taxon>
        <taxon>Halobacteria</taxon>
        <taxon>Halobacteriales</taxon>
        <taxon>Halobacteriaceae</taxon>
        <taxon>Halobacterium</taxon>
        <taxon>Halobacterium salinarum NRC-34001</taxon>
    </lineage>
</organism>
<feature type="chain" id="PRO_0000138366" description="UvrABC system protein C">
    <location>
        <begin position="1"/>
        <end position="590"/>
    </location>
</feature>
<feature type="domain" description="GIY-YIG" evidence="1">
    <location>
        <begin position="15"/>
        <end position="98"/>
    </location>
</feature>
<feature type="domain" description="UVR" evidence="1">
    <location>
        <begin position="207"/>
        <end position="242"/>
    </location>
</feature>